<organism>
    <name type="scientific">Homo sapiens</name>
    <name type="common">Human</name>
    <dbReference type="NCBI Taxonomy" id="9606"/>
    <lineage>
        <taxon>Eukaryota</taxon>
        <taxon>Metazoa</taxon>
        <taxon>Chordata</taxon>
        <taxon>Craniata</taxon>
        <taxon>Vertebrata</taxon>
        <taxon>Euteleostomi</taxon>
        <taxon>Mammalia</taxon>
        <taxon>Eutheria</taxon>
        <taxon>Euarchontoglires</taxon>
        <taxon>Primates</taxon>
        <taxon>Haplorrhini</taxon>
        <taxon>Catarrhini</taxon>
        <taxon>Hominidae</taxon>
        <taxon>Homo</taxon>
    </lineage>
</organism>
<keyword id="KW-0002">3D-structure</keyword>
<keyword id="KW-0025">Alternative splicing</keyword>
<keyword id="KW-0900">Congenital disorder of glycosylation</keyword>
<keyword id="KW-0225">Disease variant</keyword>
<keyword id="KW-0256">Endoplasmic reticulum</keyword>
<keyword id="KW-0472">Membrane</keyword>
<keyword id="KW-1267">Proteomics identification</keyword>
<keyword id="KW-1185">Reference proteome</keyword>
<keyword id="KW-0732">Signal</keyword>
<keyword id="KW-0812">Transmembrane</keyword>
<keyword id="KW-1133">Transmembrane helix</keyword>
<comment type="function">
    <text evidence="2 8 12">Subunit of the oligosaccharyl transferase (OST) complex that catalyzes the initial transfer of a defined glycan (Glc(3)Man(9)GlcNAc(2) in eukaryotes) from the lipid carrier dolichol-pyrophosphate to an asparagine residue within an Asn-X-Ser/Thr consensus motif in nascent polypeptide chains, the first step in protein N-glycosylation (PubMed:31831667). N-glycosylation occurs cotranslationally and the complex associates with the Sec61 complex at the channel-forming translocon complex that mediates protein translocation across the endoplasmic reticulum (ER). All subunits are required for a maximal enzyme activity (By similarity). Required for the assembly of both SST3A- and SS3B-containing OST complexes (PubMed:22467853).</text>
</comment>
<comment type="pathway">
    <text evidence="12">Protein modification; protein glycosylation.</text>
</comment>
<comment type="subunit">
    <text evidence="2 9 10 11 12 13 14">Component of the oligosaccharyltransferase (OST) complex (PubMed:31831667, PubMed:36697828, PubMed:38670073). OST exists in two different complex forms which contain common core subunits RPN1, RPN2, OST48, OST4, DAD1 and TMEM258, either STT3A or STT3B as catalytic subunits, and form-specific accessory subunits (PubMed:23606741, PubMed:25135935, PubMed:31831667, PubMed:36697828, PubMed:38670073). STT3A complex assembly occurs through the formation of 3 subcomplexes. Subcomplex 1 contains RPN1 and TMEM258, subcomplex 2 contains the STT3A-specific subunits STT3A, DC2/OSTC, and KCP2 as well as the core subunit OST4, and subcomplex 3 contains RPN2, DAD1, and OST48. The STT3A complex can form stable complexes with the Sec61 complex or with both the Sec61 and TRAP complexes (By similarity). Interacts with SMIM22 (PubMed:29765154).</text>
</comment>
<comment type="interaction">
    <interactant intactId="EBI-358866">
        <id>P39656</id>
    </interactant>
    <interactant intactId="EBI-2800345">
        <id>Q86WV6</id>
        <label>STING1</label>
    </interactant>
    <organismsDiffer>false</organismsDiffer>
    <experiments>2</experiments>
</comment>
<comment type="subcellular location">
    <subcellularLocation>
        <location evidence="3">Endoplasmic reticulum membrane</location>
        <topology evidence="3">Single-pass type I membrane protein</topology>
    </subcellularLocation>
</comment>
<comment type="alternative products">
    <event type="alternative splicing"/>
    <isoform>
        <id>P39656-1</id>
        <name>1</name>
        <sequence type="displayed"/>
    </isoform>
    <isoform>
        <id>P39656-2</id>
        <name>2</name>
        <sequence type="described" ref="VSP_055498"/>
    </isoform>
    <isoform>
        <id>P39656-3</id>
        <name>3</name>
        <sequence type="described" ref="VSP_055499"/>
    </isoform>
</comment>
<comment type="disease" evidence="7">
    <disease id="DI-03397">
        <name>Congenital disorder of glycosylation 1R</name>
        <acronym>CDG1R</acronym>
        <description>A form of congenital disorder of glycosylation, a multisystem disorder caused by a defect in glycoprotein biosynthesis and characterized by under-glycosylated serum glycoproteins. Congenital disorders of glycosylation result in a wide variety of clinical features, such as defects in the nervous system development, psychomotor retardation, dysmorphic features, hypotonia, coagulation disorders, and immunodeficiency. The broad spectrum of features reflects the critical role of N-glycoproteins during embryonic development, differentiation, and maintenance of cell functions.</description>
        <dbReference type="MIM" id="614507"/>
    </disease>
    <text>The disease is caused by variants affecting the gene represented in this entry.</text>
</comment>
<comment type="similarity">
    <text evidence="19">Belongs to the DDOST 48 kDa subunit family.</text>
</comment>
<comment type="caution">
    <text evidence="19">It is uncertain whether Met-1 or Met-18 is the initiator.</text>
</comment>
<comment type="sequence caution" evidence="19">
    <conflict type="erroneous initiation">
        <sequence resource="EMBL-CDS" id="BAB93478"/>
    </conflict>
</comment>
<sequence>MGYFRCARAGSFGRRRKMEPSTAARAWALFWLLLPLLGAVCASGPRTLVLLDNLNVRETHSLFFRSLKDRGFELTFKTADDPSLSLIKYGEFLYDNLIIFSPSVEDFGGNINVETISAFIDGGGSVLVAASSDIGDPLRELGSECGIEFDEEKTAVIDHHNYDISDLGQHTLIVADTENLLKAPTIVGKSSLNPILFRGVGMVADPDNPLVLDILTGSSTSYSFFPDKPITQYPHAVGKNTLLIAGLQARNNARVIFSGSLDFFSDSFFNSAVQKAAPGSQRYSQTGNYELAVALSRWVFKEEGVLRVGPVSHHRVGETAPPNAYTVTDLVEYSIVIQQLSNGKWVPFDGDDIQLEFVRIDPFVRTFLKKKGGKYSVQFKLPDVYGVFQFKVDYNRLGYTHLYSSTQVSVRPLQHTQYERFIPSAYPYYASAFSMMLGLFIFSIVFLHMKEKEKSD</sequence>
<dbReference type="EMBL" id="D89060">
    <property type="protein sequence ID" value="BAA23670.1"/>
    <property type="molecule type" value="Genomic_DNA"/>
</dbReference>
<dbReference type="EMBL" id="D29643">
    <property type="protein sequence ID" value="BAA06126.1"/>
    <property type="molecule type" value="mRNA"/>
</dbReference>
<dbReference type="EMBL" id="AK296041">
    <property type="protein sequence ID" value="BAG58805.1"/>
    <property type="molecule type" value="mRNA"/>
</dbReference>
<dbReference type="EMBL" id="AK297009">
    <property type="protein sequence ID" value="BAG59544.1"/>
    <property type="molecule type" value="mRNA"/>
</dbReference>
<dbReference type="EMBL" id="AK315633">
    <property type="protein sequence ID" value="BAG38001.1"/>
    <property type="molecule type" value="mRNA"/>
</dbReference>
<dbReference type="EMBL" id="AL391357">
    <property type="status" value="NOT_ANNOTATED_CDS"/>
    <property type="molecule type" value="Genomic_DNA"/>
</dbReference>
<dbReference type="EMBL" id="CH471134">
    <property type="protein sequence ID" value="EAW94938.1"/>
    <property type="molecule type" value="Genomic_DNA"/>
</dbReference>
<dbReference type="EMBL" id="BC002594">
    <property type="protein sequence ID" value="AAH02594.1"/>
    <property type="molecule type" value="mRNA"/>
</dbReference>
<dbReference type="EMBL" id="AB062391">
    <property type="protein sequence ID" value="BAB93478.1"/>
    <property type="status" value="ALT_INIT"/>
    <property type="molecule type" value="mRNA"/>
</dbReference>
<dbReference type="PIR" id="S66254">
    <property type="entry name" value="A44654"/>
</dbReference>
<dbReference type="RefSeq" id="NP_005207.2">
    <property type="nucleotide sequence ID" value="NM_005216.4"/>
</dbReference>
<dbReference type="PDB" id="6S7O">
    <property type="method" value="EM"/>
    <property type="resolution" value="3.50 A"/>
    <property type="chains" value="G=1-456"/>
</dbReference>
<dbReference type="PDB" id="6S7T">
    <property type="method" value="EM"/>
    <property type="resolution" value="3.50 A"/>
    <property type="chains" value="G=1-456"/>
</dbReference>
<dbReference type="PDB" id="8B6L">
    <property type="method" value="EM"/>
    <property type="resolution" value="7.60 A"/>
    <property type="chains" value="N=1-456"/>
</dbReference>
<dbReference type="PDB" id="8PN9">
    <property type="method" value="EM"/>
    <property type="resolution" value="3.61 A"/>
    <property type="chains" value="G=1-452"/>
</dbReference>
<dbReference type="PDBsum" id="6S7O"/>
<dbReference type="PDBsum" id="6S7T"/>
<dbReference type="PDBsum" id="8B6L"/>
<dbReference type="PDBsum" id="8PN9"/>
<dbReference type="EMDB" id="EMD-15870"/>
<dbReference type="EMDB" id="EMD-17779"/>
<dbReference type="SMR" id="P39656"/>
<dbReference type="BioGRID" id="108017">
    <property type="interactions" value="400"/>
</dbReference>
<dbReference type="ComplexPortal" id="CPX-5621">
    <property type="entry name" value="Oligosaccharyltransferase complex A"/>
</dbReference>
<dbReference type="ComplexPortal" id="CPX-5622">
    <property type="entry name" value="Oligosaccharyltransferase complex B, MAGT1 variant"/>
</dbReference>
<dbReference type="ComplexPortal" id="CPX-8738">
    <property type="entry name" value="Oligosaccharyltransferase complex B, TUCS3 variant"/>
</dbReference>
<dbReference type="CORUM" id="P39656"/>
<dbReference type="FunCoup" id="P39656">
    <property type="interactions" value="3096"/>
</dbReference>
<dbReference type="IntAct" id="P39656">
    <property type="interactions" value="222"/>
</dbReference>
<dbReference type="MINT" id="P39656"/>
<dbReference type="STRING" id="9606.ENSP00000399457"/>
<dbReference type="BindingDB" id="P39656"/>
<dbReference type="ChEMBL" id="CHEMBL4239"/>
<dbReference type="TCDB" id="9.B.142.3.17">
    <property type="family name" value="the integral membrane glycosyltransferase family 39 (gt39) family"/>
</dbReference>
<dbReference type="GlyGen" id="P39656">
    <property type="glycosylation" value="1 site, 1 O-linked glycan (1 site)"/>
</dbReference>
<dbReference type="iPTMnet" id="P39656"/>
<dbReference type="PhosphoSitePlus" id="P39656"/>
<dbReference type="SwissPalm" id="P39656"/>
<dbReference type="BioMuta" id="DDOST"/>
<dbReference type="DMDM" id="239938926"/>
<dbReference type="CPTAC" id="CPTAC-349"/>
<dbReference type="CPTAC" id="CPTAC-350"/>
<dbReference type="jPOST" id="P39656"/>
<dbReference type="MassIVE" id="P39656"/>
<dbReference type="PaxDb" id="9606-ENSP00000399457"/>
<dbReference type="PeptideAtlas" id="P39656"/>
<dbReference type="ProteomicsDB" id="55317">
    <molecule id="P39656-1"/>
</dbReference>
<dbReference type="Pumba" id="P39656"/>
<dbReference type="TopDownProteomics" id="P39656-1">
    <molecule id="P39656-1"/>
</dbReference>
<dbReference type="Antibodypedia" id="29811">
    <property type="antibodies" value="241 antibodies from 25 providers"/>
</dbReference>
<dbReference type="DNASU" id="1650"/>
<dbReference type="Ensembl" id="ENST00000415136.6">
    <molecule id="P39656-1"/>
    <property type="protein sequence ID" value="ENSP00000399457.3"/>
    <property type="gene ID" value="ENSG00000244038.11"/>
</dbReference>
<dbReference type="GeneID" id="1650"/>
<dbReference type="KEGG" id="hsa:1650"/>
<dbReference type="UCSC" id="uc001bdo.1">
    <molecule id="P39656-1"/>
    <property type="organism name" value="human"/>
</dbReference>
<dbReference type="AGR" id="HGNC:2728"/>
<dbReference type="CTD" id="1650"/>
<dbReference type="DisGeNET" id="1650"/>
<dbReference type="GeneCards" id="DDOST"/>
<dbReference type="GeneReviews" id="DDOST"/>
<dbReference type="HGNC" id="HGNC:2728">
    <property type="gene designation" value="DDOST"/>
</dbReference>
<dbReference type="HPA" id="ENSG00000244038">
    <property type="expression patterns" value="Low tissue specificity"/>
</dbReference>
<dbReference type="MalaCards" id="DDOST"/>
<dbReference type="MIM" id="602202">
    <property type="type" value="gene"/>
</dbReference>
<dbReference type="MIM" id="614507">
    <property type="type" value="phenotype"/>
</dbReference>
<dbReference type="neXtProt" id="NX_P39656"/>
<dbReference type="OpenTargets" id="ENSG00000244038"/>
<dbReference type="Orphanet" id="300536">
    <property type="disease" value="DDOST-CDG"/>
</dbReference>
<dbReference type="PharmGKB" id="PA27195"/>
<dbReference type="VEuPathDB" id="HostDB:ENSG00000244038"/>
<dbReference type="eggNOG" id="KOG2754">
    <property type="taxonomic scope" value="Eukaryota"/>
</dbReference>
<dbReference type="GeneTree" id="ENSGT00390000017294"/>
<dbReference type="InParanoid" id="P39656"/>
<dbReference type="OMA" id="AHDEYPR"/>
<dbReference type="OrthoDB" id="29105at2759"/>
<dbReference type="PAN-GO" id="P39656">
    <property type="GO annotations" value="2 GO annotations based on evolutionary models"/>
</dbReference>
<dbReference type="PhylomeDB" id="P39656"/>
<dbReference type="TreeFam" id="TF314821"/>
<dbReference type="BRENDA" id="2.4.99.18">
    <property type="organism ID" value="2681"/>
</dbReference>
<dbReference type="PathwayCommons" id="P39656"/>
<dbReference type="Reactome" id="R-HSA-1799339">
    <property type="pathway name" value="SRP-dependent cotranslational protein targeting to membrane"/>
</dbReference>
<dbReference type="Reactome" id="R-HSA-446203">
    <property type="pathway name" value="Asparagine N-linked glycosylation"/>
</dbReference>
<dbReference type="Reactome" id="R-HSA-6798695">
    <property type="pathway name" value="Neutrophil degranulation"/>
</dbReference>
<dbReference type="Reactome" id="R-HSA-879415">
    <property type="pathway name" value="Advanced glycosylation endproduct receptor signaling"/>
</dbReference>
<dbReference type="Reactome" id="R-HSA-9694548">
    <property type="pathway name" value="Maturation of spike protein"/>
</dbReference>
<dbReference type="SignaLink" id="P39656"/>
<dbReference type="SIGNOR" id="P39656"/>
<dbReference type="UniPathway" id="UPA00378"/>
<dbReference type="BioGRID-ORCS" id="1650">
    <property type="hits" value="761 hits in 1132 CRISPR screens"/>
</dbReference>
<dbReference type="CD-CODE" id="91857CE7">
    <property type="entry name" value="Nucleolus"/>
</dbReference>
<dbReference type="ChiTaRS" id="DDOST">
    <property type="organism name" value="human"/>
</dbReference>
<dbReference type="GeneWiki" id="DDOST"/>
<dbReference type="GenomeRNAi" id="1650"/>
<dbReference type="Pharos" id="P39656">
    <property type="development level" value="Tchem"/>
</dbReference>
<dbReference type="PRO" id="PR:P39656"/>
<dbReference type="Proteomes" id="UP000005640">
    <property type="component" value="Chromosome 1"/>
</dbReference>
<dbReference type="RNAct" id="P39656">
    <property type="molecule type" value="protein"/>
</dbReference>
<dbReference type="Bgee" id="ENSG00000244038">
    <property type="expression patterns" value="Expressed in corpus epididymis and 205 other cell types or tissues"/>
</dbReference>
<dbReference type="ExpressionAtlas" id="P39656">
    <property type="expression patterns" value="baseline and differential"/>
</dbReference>
<dbReference type="GO" id="GO:0035577">
    <property type="term" value="C:azurophil granule membrane"/>
    <property type="evidence" value="ECO:0000304"/>
    <property type="project" value="Reactome"/>
</dbReference>
<dbReference type="GO" id="GO:0005783">
    <property type="term" value="C:endoplasmic reticulum"/>
    <property type="evidence" value="ECO:0000314"/>
    <property type="project" value="HPA"/>
</dbReference>
<dbReference type="GO" id="GO:0005789">
    <property type="term" value="C:endoplasmic reticulum membrane"/>
    <property type="evidence" value="ECO:0000304"/>
    <property type="project" value="Reactome"/>
</dbReference>
<dbReference type="GO" id="GO:0043231">
    <property type="term" value="C:intracellular membrane-bounded organelle"/>
    <property type="evidence" value="ECO:0000314"/>
    <property type="project" value="UniProtKB"/>
</dbReference>
<dbReference type="GO" id="GO:0016020">
    <property type="term" value="C:membrane"/>
    <property type="evidence" value="ECO:0007005"/>
    <property type="project" value="UniProtKB"/>
</dbReference>
<dbReference type="GO" id="GO:0008250">
    <property type="term" value="C:oligosaccharyltransferase complex"/>
    <property type="evidence" value="ECO:0000314"/>
    <property type="project" value="UniProtKB"/>
</dbReference>
<dbReference type="GO" id="GO:0160226">
    <property type="term" value="C:oligosaccharyltransferase complex A"/>
    <property type="evidence" value="ECO:0000314"/>
    <property type="project" value="UniProtKB"/>
</dbReference>
<dbReference type="GO" id="GO:0160227">
    <property type="term" value="C:oligosaccharyltransferase complex B"/>
    <property type="evidence" value="ECO:0000314"/>
    <property type="project" value="UniProtKB"/>
</dbReference>
<dbReference type="GO" id="GO:0005886">
    <property type="term" value="C:plasma membrane"/>
    <property type="evidence" value="ECO:0000304"/>
    <property type="project" value="Reactome"/>
</dbReference>
<dbReference type="GO" id="GO:0008047">
    <property type="term" value="F:enzyme activator activity"/>
    <property type="evidence" value="ECO:0000315"/>
    <property type="project" value="ARUK-UCL"/>
</dbReference>
<dbReference type="GO" id="GO:0006486">
    <property type="term" value="P:protein glycosylation"/>
    <property type="evidence" value="ECO:0000250"/>
    <property type="project" value="UniProtKB"/>
</dbReference>
<dbReference type="GO" id="GO:0006487">
    <property type="term" value="P:protein N-linked glycosylation"/>
    <property type="evidence" value="ECO:0000314"/>
    <property type="project" value="UniProtKB"/>
</dbReference>
<dbReference type="GO" id="GO:0018279">
    <property type="term" value="P:protein N-linked glycosylation via asparagine"/>
    <property type="evidence" value="ECO:0000315"/>
    <property type="project" value="ARUK-UCL"/>
</dbReference>
<dbReference type="GO" id="GO:0031647">
    <property type="term" value="P:regulation of protein stability"/>
    <property type="evidence" value="ECO:0000315"/>
    <property type="project" value="ARUK-UCL"/>
</dbReference>
<dbReference type="GO" id="GO:0034097">
    <property type="term" value="P:response to cytokine"/>
    <property type="evidence" value="ECO:0000314"/>
    <property type="project" value="UniProtKB"/>
</dbReference>
<dbReference type="GO" id="GO:0042110">
    <property type="term" value="P:T cell activation"/>
    <property type="evidence" value="ECO:0000314"/>
    <property type="project" value="UniProtKB"/>
</dbReference>
<dbReference type="InterPro" id="IPR005013">
    <property type="entry name" value="DDOST_48_kDa_subunit"/>
</dbReference>
<dbReference type="InterPro" id="IPR055459">
    <property type="entry name" value="OST48_MD"/>
</dbReference>
<dbReference type="InterPro" id="IPR055457">
    <property type="entry name" value="OST48_N"/>
</dbReference>
<dbReference type="PANTHER" id="PTHR10830">
    <property type="entry name" value="DOLICHYL-DIPHOSPHOOLIGOSACCHARIDE--PROTEIN GLYCOSYLTRANSFERASE 48 KDA SUBUNIT"/>
    <property type="match status" value="1"/>
</dbReference>
<dbReference type="PANTHER" id="PTHR10830:SF0">
    <property type="entry name" value="DOLICHYL-DIPHOSPHOOLIGOSACCHARIDE--PROTEIN GLYCOSYLTRANSFERASE 48 KDA SUBUNIT"/>
    <property type="match status" value="1"/>
</dbReference>
<dbReference type="Pfam" id="PF23358">
    <property type="entry name" value="OST48_MD"/>
    <property type="match status" value="1"/>
</dbReference>
<dbReference type="Pfam" id="PF03345">
    <property type="entry name" value="OST48_N"/>
    <property type="match status" value="1"/>
</dbReference>
<feature type="signal peptide" evidence="1">
    <location>
        <begin position="1"/>
        <end position="42"/>
    </location>
</feature>
<feature type="chain" id="PRO_0000021957" description="Dolichyl-diphosphooligosaccharide--protein glycosyltransferase 48 kDa subunit">
    <location>
        <begin position="43"/>
        <end position="456"/>
    </location>
</feature>
<feature type="topological domain" description="Lumenal" evidence="4">
    <location>
        <begin position="43"/>
        <end position="427"/>
    </location>
</feature>
<feature type="transmembrane region" description="Helical" evidence="4">
    <location>
        <begin position="428"/>
        <end position="447"/>
    </location>
</feature>
<feature type="topological domain" description="Cytoplasmic" evidence="4">
    <location>
        <begin position="448"/>
        <end position="456"/>
    </location>
</feature>
<feature type="splice variant" id="VSP_055498" description="In isoform 2." evidence="18">
    <location>
        <begin position="69"/>
        <end position="105"/>
    </location>
</feature>
<feature type="splice variant" id="VSP_055499" description="In isoform 3." evidence="18">
    <location>
        <begin position="124"/>
        <end position="141"/>
    </location>
</feature>
<feature type="sequence variant" id="VAR_047911" description="In dbSNP:rs537816." evidence="5 6 15 16 17">
    <original>R</original>
    <variation>G</variation>
    <location>
        <position position="8"/>
    </location>
</feature>
<feature type="sequence variant" id="VAR_067544" description="In CDG1R; dbSNP:rs387906831." evidence="7">
    <original>G</original>
    <variation>D</variation>
    <location>
        <position position="217"/>
    </location>
</feature>
<feature type="sequence conflict" description="In Ref. 3; BAG59544." evidence="19" ref="3">
    <original>P</original>
    <variation>R</variation>
    <location>
        <position position="229"/>
    </location>
</feature>
<feature type="sequence conflict" description="In Ref. 1; BAA23670." evidence="19" ref="1">
    <original>G</original>
    <variation>A</variation>
    <location>
        <position position="343"/>
    </location>
</feature>
<feature type="sequence conflict" description="In Ref. 1; BAA23670 and 2; BAA06126." evidence="19" ref="1 2">
    <original>S</original>
    <variation>P</variation>
    <location>
        <position position="434"/>
    </location>
</feature>
<feature type="strand" evidence="25">
    <location>
        <begin position="45"/>
        <end position="53"/>
    </location>
</feature>
<feature type="helix" evidence="25">
    <location>
        <begin position="56"/>
        <end position="59"/>
    </location>
</feature>
<feature type="helix" evidence="25">
    <location>
        <begin position="61"/>
        <end position="69"/>
    </location>
</feature>
<feature type="strand" evidence="25">
    <location>
        <begin position="73"/>
        <end position="78"/>
    </location>
</feature>
<feature type="strand" evidence="25">
    <location>
        <begin position="88"/>
        <end position="90"/>
    </location>
</feature>
<feature type="strand" evidence="25">
    <location>
        <begin position="95"/>
        <end position="100"/>
    </location>
</feature>
<feature type="strand" evidence="26">
    <location>
        <begin position="103"/>
        <end position="106"/>
    </location>
</feature>
<feature type="helix" evidence="25">
    <location>
        <begin position="113"/>
        <end position="121"/>
    </location>
</feature>
<feature type="strand" evidence="25">
    <location>
        <begin position="125"/>
        <end position="130"/>
    </location>
</feature>
<feature type="helix" evidence="25">
    <location>
        <begin position="136"/>
        <end position="143"/>
    </location>
</feature>
<feature type="turn" evidence="25">
    <location>
        <begin position="144"/>
        <end position="146"/>
    </location>
</feature>
<feature type="strand" evidence="26">
    <location>
        <begin position="155"/>
        <end position="157"/>
    </location>
</feature>
<feature type="strand" evidence="25">
    <location>
        <begin position="158"/>
        <end position="163"/>
    </location>
</feature>
<feature type="strand" evidence="25">
    <location>
        <begin position="168"/>
        <end position="170"/>
    </location>
</feature>
<feature type="strand" evidence="25">
    <location>
        <begin position="173"/>
        <end position="175"/>
    </location>
</feature>
<feature type="strand" evidence="25">
    <location>
        <begin position="177"/>
        <end position="180"/>
    </location>
</feature>
<feature type="turn" evidence="25">
    <location>
        <begin position="184"/>
        <end position="186"/>
    </location>
</feature>
<feature type="strand" evidence="25">
    <location>
        <begin position="195"/>
        <end position="197"/>
    </location>
</feature>
<feature type="strand" evidence="26">
    <location>
        <begin position="202"/>
        <end position="204"/>
    </location>
</feature>
<feature type="strand" evidence="26">
    <location>
        <begin position="209"/>
        <end position="211"/>
    </location>
</feature>
<feature type="strand" evidence="25">
    <location>
        <begin position="212"/>
        <end position="215"/>
    </location>
</feature>
<feature type="strand" evidence="26">
    <location>
        <begin position="222"/>
        <end position="224"/>
    </location>
</feature>
<feature type="strand" evidence="26">
    <location>
        <begin position="226"/>
        <end position="228"/>
    </location>
</feature>
<feature type="strand" evidence="25">
    <location>
        <begin position="243"/>
        <end position="248"/>
    </location>
</feature>
<feature type="strand" evidence="25">
    <location>
        <begin position="254"/>
        <end position="259"/>
    </location>
</feature>
<feature type="helix" evidence="25">
    <location>
        <begin position="261"/>
        <end position="264"/>
    </location>
</feature>
<feature type="helix" evidence="25">
    <location>
        <begin position="266"/>
        <end position="269"/>
    </location>
</feature>
<feature type="turn" evidence="25">
    <location>
        <begin position="276"/>
        <end position="279"/>
    </location>
</feature>
<feature type="strand" evidence="25">
    <location>
        <begin position="283"/>
        <end position="285"/>
    </location>
</feature>
<feature type="helix" evidence="25">
    <location>
        <begin position="288"/>
        <end position="299"/>
    </location>
</feature>
<feature type="strand" evidence="25">
    <location>
        <begin position="302"/>
        <end position="304"/>
    </location>
</feature>
<feature type="strand" evidence="26">
    <location>
        <begin position="306"/>
        <end position="308"/>
    </location>
</feature>
<feature type="strand" evidence="25">
    <location>
        <begin position="312"/>
        <end position="315"/>
    </location>
</feature>
<feature type="strand" evidence="25">
    <location>
        <begin position="323"/>
        <end position="328"/>
    </location>
</feature>
<feature type="strand" evidence="25">
    <location>
        <begin position="330"/>
        <end position="334"/>
    </location>
</feature>
<feature type="strand" evidence="26">
    <location>
        <begin position="337"/>
        <end position="341"/>
    </location>
</feature>
<feature type="strand" evidence="26">
    <location>
        <begin position="344"/>
        <end position="347"/>
    </location>
</feature>
<feature type="strand" evidence="25">
    <location>
        <begin position="354"/>
        <end position="367"/>
    </location>
</feature>
<feature type="strand" evidence="26">
    <location>
        <begin position="369"/>
        <end position="371"/>
    </location>
</feature>
<feature type="strand" evidence="25">
    <location>
        <begin position="377"/>
        <end position="380"/>
    </location>
</feature>
<feature type="strand" evidence="25">
    <location>
        <begin position="386"/>
        <end position="394"/>
    </location>
</feature>
<feature type="strand" evidence="26">
    <location>
        <begin position="397"/>
        <end position="399"/>
    </location>
</feature>
<feature type="strand" evidence="25">
    <location>
        <begin position="402"/>
        <end position="411"/>
    </location>
</feature>
<feature type="strand" evidence="26">
    <location>
        <begin position="415"/>
        <end position="418"/>
    </location>
</feature>
<feature type="helix" evidence="25">
    <location>
        <begin position="423"/>
        <end position="425"/>
    </location>
</feature>
<feature type="helix" evidence="25">
    <location>
        <begin position="426"/>
        <end position="445"/>
    </location>
</feature>
<reference key="1">
    <citation type="journal article" date="1997" name="Genomics">
        <title>Genome organization of human 48-kDa oligosaccharyltransferase (DDOST).</title>
        <authorList>
            <person name="Yamagata T."/>
            <person name="Tsuru T."/>
            <person name="Momoi M.Y."/>
            <person name="Suwa K."/>
            <person name="Nozaki Y."/>
            <person name="Mukasa T."/>
            <person name="Ohashi H."/>
            <person name="Fukushima Y."/>
            <person name="Momoi T."/>
        </authorList>
    </citation>
    <scope>NUCLEOTIDE SEQUENCE [GENOMIC DNA]</scope>
    <scope>VARIANT GLY-8</scope>
</reference>
<reference key="2">
    <citation type="journal article" date="1995" name="DNA Res.">
        <title>Prediction of the coding sequences of unidentified human genes. III. The coding sequences of 40 new genes (KIAA0081-KIAA0120) deduced by analysis of cDNA clones from human cell line KG-1.</title>
        <authorList>
            <person name="Nagase T."/>
            <person name="Miyajima N."/>
            <person name="Tanaka A."/>
            <person name="Sazuka T."/>
            <person name="Seki N."/>
            <person name="Sato S."/>
            <person name="Tabata S."/>
            <person name="Ishikawa K."/>
            <person name="Kawarabayasi Y."/>
            <person name="Kotani H."/>
            <person name="Nomura N."/>
        </authorList>
    </citation>
    <scope>NUCLEOTIDE SEQUENCE [LARGE SCALE MRNA] (ISOFORM 1)</scope>
    <scope>VARIANT GLY-8</scope>
    <source>
        <tissue>Bone marrow</tissue>
    </source>
</reference>
<reference key="3">
    <citation type="journal article" date="2004" name="Nat. Genet.">
        <title>Complete sequencing and characterization of 21,243 full-length human cDNAs.</title>
        <authorList>
            <person name="Ota T."/>
            <person name="Suzuki Y."/>
            <person name="Nishikawa T."/>
            <person name="Otsuki T."/>
            <person name="Sugiyama T."/>
            <person name="Irie R."/>
            <person name="Wakamatsu A."/>
            <person name="Hayashi K."/>
            <person name="Sato H."/>
            <person name="Nagai K."/>
            <person name="Kimura K."/>
            <person name="Makita H."/>
            <person name="Sekine M."/>
            <person name="Obayashi M."/>
            <person name="Nishi T."/>
            <person name="Shibahara T."/>
            <person name="Tanaka T."/>
            <person name="Ishii S."/>
            <person name="Yamamoto J."/>
            <person name="Saito K."/>
            <person name="Kawai Y."/>
            <person name="Isono Y."/>
            <person name="Nakamura Y."/>
            <person name="Nagahari K."/>
            <person name="Murakami K."/>
            <person name="Yasuda T."/>
            <person name="Iwayanagi T."/>
            <person name="Wagatsuma M."/>
            <person name="Shiratori A."/>
            <person name="Sudo H."/>
            <person name="Hosoiri T."/>
            <person name="Kaku Y."/>
            <person name="Kodaira H."/>
            <person name="Kondo H."/>
            <person name="Sugawara M."/>
            <person name="Takahashi M."/>
            <person name="Kanda K."/>
            <person name="Yokoi T."/>
            <person name="Furuya T."/>
            <person name="Kikkawa E."/>
            <person name="Omura Y."/>
            <person name="Abe K."/>
            <person name="Kamihara K."/>
            <person name="Katsuta N."/>
            <person name="Sato K."/>
            <person name="Tanikawa M."/>
            <person name="Yamazaki M."/>
            <person name="Ninomiya K."/>
            <person name="Ishibashi T."/>
            <person name="Yamashita H."/>
            <person name="Murakawa K."/>
            <person name="Fujimori K."/>
            <person name="Tanai H."/>
            <person name="Kimata M."/>
            <person name="Watanabe M."/>
            <person name="Hiraoka S."/>
            <person name="Chiba Y."/>
            <person name="Ishida S."/>
            <person name="Ono Y."/>
            <person name="Takiguchi S."/>
            <person name="Watanabe S."/>
            <person name="Yosida M."/>
            <person name="Hotuta T."/>
            <person name="Kusano J."/>
            <person name="Kanehori K."/>
            <person name="Takahashi-Fujii A."/>
            <person name="Hara H."/>
            <person name="Tanase T.-O."/>
            <person name="Nomura Y."/>
            <person name="Togiya S."/>
            <person name="Komai F."/>
            <person name="Hara R."/>
            <person name="Takeuchi K."/>
            <person name="Arita M."/>
            <person name="Imose N."/>
            <person name="Musashino K."/>
            <person name="Yuuki H."/>
            <person name="Oshima A."/>
            <person name="Sasaki N."/>
            <person name="Aotsuka S."/>
            <person name="Yoshikawa Y."/>
            <person name="Matsunawa H."/>
            <person name="Ichihara T."/>
            <person name="Shiohata N."/>
            <person name="Sano S."/>
            <person name="Moriya S."/>
            <person name="Momiyama H."/>
            <person name="Satoh N."/>
            <person name="Takami S."/>
            <person name="Terashima Y."/>
            <person name="Suzuki O."/>
            <person name="Nakagawa S."/>
            <person name="Senoh A."/>
            <person name="Mizoguchi H."/>
            <person name="Goto Y."/>
            <person name="Shimizu F."/>
            <person name="Wakebe H."/>
            <person name="Hishigaki H."/>
            <person name="Watanabe T."/>
            <person name="Sugiyama A."/>
            <person name="Takemoto M."/>
            <person name="Kawakami B."/>
            <person name="Yamazaki M."/>
            <person name="Watanabe K."/>
            <person name="Kumagai A."/>
            <person name="Itakura S."/>
            <person name="Fukuzumi Y."/>
            <person name="Fujimori Y."/>
            <person name="Komiyama M."/>
            <person name="Tashiro H."/>
            <person name="Tanigami A."/>
            <person name="Fujiwara T."/>
            <person name="Ono T."/>
            <person name="Yamada K."/>
            <person name="Fujii Y."/>
            <person name="Ozaki K."/>
            <person name="Hirao M."/>
            <person name="Ohmori Y."/>
            <person name="Kawabata A."/>
            <person name="Hikiji T."/>
            <person name="Kobatake N."/>
            <person name="Inagaki H."/>
            <person name="Ikema Y."/>
            <person name="Okamoto S."/>
            <person name="Okitani R."/>
            <person name="Kawakami T."/>
            <person name="Noguchi S."/>
            <person name="Itoh T."/>
            <person name="Shigeta K."/>
            <person name="Senba T."/>
            <person name="Matsumura K."/>
            <person name="Nakajima Y."/>
            <person name="Mizuno T."/>
            <person name="Morinaga M."/>
            <person name="Sasaki M."/>
            <person name="Togashi T."/>
            <person name="Oyama M."/>
            <person name="Hata H."/>
            <person name="Watanabe M."/>
            <person name="Komatsu T."/>
            <person name="Mizushima-Sugano J."/>
            <person name="Satoh T."/>
            <person name="Shirai Y."/>
            <person name="Takahashi Y."/>
            <person name="Nakagawa K."/>
            <person name="Okumura K."/>
            <person name="Nagase T."/>
            <person name="Nomura N."/>
            <person name="Kikuchi H."/>
            <person name="Masuho Y."/>
            <person name="Yamashita R."/>
            <person name="Nakai K."/>
            <person name="Yada T."/>
            <person name="Nakamura Y."/>
            <person name="Ohara O."/>
            <person name="Isogai T."/>
            <person name="Sugano S."/>
        </authorList>
    </citation>
    <scope>NUCLEOTIDE SEQUENCE [LARGE SCALE MRNA] (ISOFORMS 1; 2 AND 3)</scope>
    <scope>VARIANT GLY-8</scope>
    <source>
        <tissue>Subthalamic nucleus</tissue>
        <tissue>Synovium</tissue>
        <tissue>Umbilical cord blood</tissue>
    </source>
</reference>
<reference key="4">
    <citation type="journal article" date="2006" name="Nature">
        <title>The DNA sequence and biological annotation of human chromosome 1.</title>
        <authorList>
            <person name="Gregory S.G."/>
            <person name="Barlow K.F."/>
            <person name="McLay K.E."/>
            <person name="Kaul R."/>
            <person name="Swarbreck D."/>
            <person name="Dunham A."/>
            <person name="Scott C.E."/>
            <person name="Howe K.L."/>
            <person name="Woodfine K."/>
            <person name="Spencer C.C.A."/>
            <person name="Jones M.C."/>
            <person name="Gillson C."/>
            <person name="Searle S."/>
            <person name="Zhou Y."/>
            <person name="Kokocinski F."/>
            <person name="McDonald L."/>
            <person name="Evans R."/>
            <person name="Phillips K."/>
            <person name="Atkinson A."/>
            <person name="Cooper R."/>
            <person name="Jones C."/>
            <person name="Hall R.E."/>
            <person name="Andrews T.D."/>
            <person name="Lloyd C."/>
            <person name="Ainscough R."/>
            <person name="Almeida J.P."/>
            <person name="Ambrose K.D."/>
            <person name="Anderson F."/>
            <person name="Andrew R.W."/>
            <person name="Ashwell R.I.S."/>
            <person name="Aubin K."/>
            <person name="Babbage A.K."/>
            <person name="Bagguley C.L."/>
            <person name="Bailey J."/>
            <person name="Beasley H."/>
            <person name="Bethel G."/>
            <person name="Bird C.P."/>
            <person name="Bray-Allen S."/>
            <person name="Brown J.Y."/>
            <person name="Brown A.J."/>
            <person name="Buckley D."/>
            <person name="Burton J."/>
            <person name="Bye J."/>
            <person name="Carder C."/>
            <person name="Chapman J.C."/>
            <person name="Clark S.Y."/>
            <person name="Clarke G."/>
            <person name="Clee C."/>
            <person name="Cobley V."/>
            <person name="Collier R.E."/>
            <person name="Corby N."/>
            <person name="Coville G.J."/>
            <person name="Davies J."/>
            <person name="Deadman R."/>
            <person name="Dunn M."/>
            <person name="Earthrowl M."/>
            <person name="Ellington A.G."/>
            <person name="Errington H."/>
            <person name="Frankish A."/>
            <person name="Frankland J."/>
            <person name="French L."/>
            <person name="Garner P."/>
            <person name="Garnett J."/>
            <person name="Gay L."/>
            <person name="Ghori M.R.J."/>
            <person name="Gibson R."/>
            <person name="Gilby L.M."/>
            <person name="Gillett W."/>
            <person name="Glithero R.J."/>
            <person name="Grafham D.V."/>
            <person name="Griffiths C."/>
            <person name="Griffiths-Jones S."/>
            <person name="Grocock R."/>
            <person name="Hammond S."/>
            <person name="Harrison E.S.I."/>
            <person name="Hart E."/>
            <person name="Haugen E."/>
            <person name="Heath P.D."/>
            <person name="Holmes S."/>
            <person name="Holt K."/>
            <person name="Howden P.J."/>
            <person name="Hunt A.R."/>
            <person name="Hunt S.E."/>
            <person name="Hunter G."/>
            <person name="Isherwood J."/>
            <person name="James R."/>
            <person name="Johnson C."/>
            <person name="Johnson D."/>
            <person name="Joy A."/>
            <person name="Kay M."/>
            <person name="Kershaw J.K."/>
            <person name="Kibukawa M."/>
            <person name="Kimberley A.M."/>
            <person name="King A."/>
            <person name="Knights A.J."/>
            <person name="Lad H."/>
            <person name="Laird G."/>
            <person name="Lawlor S."/>
            <person name="Leongamornlert D.A."/>
            <person name="Lloyd D.M."/>
            <person name="Loveland J."/>
            <person name="Lovell J."/>
            <person name="Lush M.J."/>
            <person name="Lyne R."/>
            <person name="Martin S."/>
            <person name="Mashreghi-Mohammadi M."/>
            <person name="Matthews L."/>
            <person name="Matthews N.S.W."/>
            <person name="McLaren S."/>
            <person name="Milne S."/>
            <person name="Mistry S."/>
            <person name="Moore M.J.F."/>
            <person name="Nickerson T."/>
            <person name="O'Dell C.N."/>
            <person name="Oliver K."/>
            <person name="Palmeiri A."/>
            <person name="Palmer S.A."/>
            <person name="Parker A."/>
            <person name="Patel D."/>
            <person name="Pearce A.V."/>
            <person name="Peck A.I."/>
            <person name="Pelan S."/>
            <person name="Phelps K."/>
            <person name="Phillimore B.J."/>
            <person name="Plumb R."/>
            <person name="Rajan J."/>
            <person name="Raymond C."/>
            <person name="Rouse G."/>
            <person name="Saenphimmachak C."/>
            <person name="Sehra H.K."/>
            <person name="Sheridan E."/>
            <person name="Shownkeen R."/>
            <person name="Sims S."/>
            <person name="Skuce C.D."/>
            <person name="Smith M."/>
            <person name="Steward C."/>
            <person name="Subramanian S."/>
            <person name="Sycamore N."/>
            <person name="Tracey A."/>
            <person name="Tromans A."/>
            <person name="Van Helmond Z."/>
            <person name="Wall M."/>
            <person name="Wallis J.M."/>
            <person name="White S."/>
            <person name="Whitehead S.L."/>
            <person name="Wilkinson J.E."/>
            <person name="Willey D.L."/>
            <person name="Williams H."/>
            <person name="Wilming L."/>
            <person name="Wray P.W."/>
            <person name="Wu Z."/>
            <person name="Coulson A."/>
            <person name="Vaudin M."/>
            <person name="Sulston J.E."/>
            <person name="Durbin R.M."/>
            <person name="Hubbard T."/>
            <person name="Wooster R."/>
            <person name="Dunham I."/>
            <person name="Carter N.P."/>
            <person name="McVean G."/>
            <person name="Ross M.T."/>
            <person name="Harrow J."/>
            <person name="Olson M.V."/>
            <person name="Beck S."/>
            <person name="Rogers J."/>
            <person name="Bentley D.R."/>
        </authorList>
    </citation>
    <scope>NUCLEOTIDE SEQUENCE [LARGE SCALE GENOMIC DNA]</scope>
</reference>
<reference key="5">
    <citation type="submission" date="2005-07" db="EMBL/GenBank/DDBJ databases">
        <authorList>
            <person name="Mural R.J."/>
            <person name="Istrail S."/>
            <person name="Sutton G.G."/>
            <person name="Florea L."/>
            <person name="Halpern A.L."/>
            <person name="Mobarry C.M."/>
            <person name="Lippert R."/>
            <person name="Walenz B."/>
            <person name="Shatkay H."/>
            <person name="Dew I."/>
            <person name="Miller J.R."/>
            <person name="Flanigan M.J."/>
            <person name="Edwards N.J."/>
            <person name="Bolanos R."/>
            <person name="Fasulo D."/>
            <person name="Halldorsson B.V."/>
            <person name="Hannenhalli S."/>
            <person name="Turner R."/>
            <person name="Yooseph S."/>
            <person name="Lu F."/>
            <person name="Nusskern D.R."/>
            <person name="Shue B.C."/>
            <person name="Zheng X.H."/>
            <person name="Zhong F."/>
            <person name="Delcher A.L."/>
            <person name="Huson D.H."/>
            <person name="Kravitz S.A."/>
            <person name="Mouchard L."/>
            <person name="Reinert K."/>
            <person name="Remington K.A."/>
            <person name="Clark A.G."/>
            <person name="Waterman M.S."/>
            <person name="Eichler E.E."/>
            <person name="Adams M.D."/>
            <person name="Hunkapiller M.W."/>
            <person name="Myers E.W."/>
            <person name="Venter J.C."/>
        </authorList>
    </citation>
    <scope>NUCLEOTIDE SEQUENCE [LARGE SCALE GENOMIC DNA]</scope>
    <scope>VARIANT GLY-8</scope>
</reference>
<reference key="6">
    <citation type="journal article" date="2004" name="Genome Res.">
        <title>The status, quality, and expansion of the NIH full-length cDNA project: the Mammalian Gene Collection (MGC).</title>
        <authorList>
            <consortium name="The MGC Project Team"/>
        </authorList>
    </citation>
    <scope>NUCLEOTIDE SEQUENCE [LARGE SCALE MRNA] (ISOFORM 1)</scope>
    <scope>VARIANT GLY-8</scope>
    <source>
        <tissue>Brain</tissue>
    </source>
</reference>
<reference key="7">
    <citation type="submission" date="2001-05" db="EMBL/GenBank/DDBJ databases">
        <title>Identification of immuno-peptidmics that are recognized by tumor-reactive CTL generated from TIL of colon cancer patients.</title>
        <authorList>
            <person name="Shichijo S."/>
            <person name="Itoh K."/>
        </authorList>
    </citation>
    <scope>NUCLEOTIDE SEQUENCE [LARGE SCALE MRNA] OF 9-456 (ISOFORM 1)</scope>
    <source>
        <tissue>Colon adenocarcinoma</tissue>
    </source>
</reference>
<reference key="8">
    <citation type="journal article" date="2011" name="BMC Syst. Biol.">
        <title>Initial characterization of the human central proteome.</title>
        <authorList>
            <person name="Burkard T.R."/>
            <person name="Planyavsky M."/>
            <person name="Kaupe I."/>
            <person name="Breitwieser F.P."/>
            <person name="Buerckstuemmer T."/>
            <person name="Bennett K.L."/>
            <person name="Superti-Furga G."/>
            <person name="Colinge J."/>
        </authorList>
    </citation>
    <scope>IDENTIFICATION BY MASS SPECTROMETRY [LARGE SCALE ANALYSIS]</scope>
</reference>
<reference key="9">
    <citation type="journal article" date="2012" name="J. Cell Sci.">
        <title>The oligosaccharyltransferase subunits OST48, DAD1 and KCP2 function as ubiquitous and selective modulators of mammalian N-glycosylation.</title>
        <authorList>
            <person name="Roboti P."/>
            <person name="High S."/>
        </authorList>
    </citation>
    <scope>FUNCTION</scope>
</reference>
<reference key="10">
    <citation type="journal article" date="2014" name="J. Cell Biol.">
        <title>Oxidoreductase activity is necessary for N-glycosylation of cysteine-proximal acceptor sites in glycoproteins.</title>
        <authorList>
            <person name="Cherepanova N.A."/>
            <person name="Shrimal S."/>
            <person name="Gilmore R."/>
        </authorList>
    </citation>
    <scope>IDENTIFICATION IN THE OLIGOSACCHARYLTRANSFERASE COMPLEX</scope>
</reference>
<reference key="11">
    <citation type="journal article" date="2013" name="J. Cell Sci.">
        <title>OST4 is a subunit of the mammalian oligosaccharyltransferase required for efficient N-glycosylation.</title>
        <authorList>
            <person name="Dumax-Vorzet A."/>
            <person name="Roboti P."/>
            <person name="High S."/>
        </authorList>
    </citation>
    <scope>IDENTIFICATION IN THE OLIGOSACCHARYLTRANSFERASE COMPLEX</scope>
</reference>
<reference key="12">
    <citation type="journal article" date="2014" name="J. Proteomics">
        <title>An enzyme assisted RP-RPLC approach for in-depth analysis of human liver phosphoproteome.</title>
        <authorList>
            <person name="Bian Y."/>
            <person name="Song C."/>
            <person name="Cheng K."/>
            <person name="Dong M."/>
            <person name="Wang F."/>
            <person name="Huang J."/>
            <person name="Sun D."/>
            <person name="Wang L."/>
            <person name="Ye M."/>
            <person name="Zou H."/>
        </authorList>
    </citation>
    <scope>IDENTIFICATION BY MASS SPECTROMETRY [LARGE SCALE ANALYSIS]</scope>
    <source>
        <tissue>Liver</tissue>
    </source>
</reference>
<reference key="13">
    <citation type="journal article" date="2015" name="Proteomics">
        <title>N-terminome analysis of the human mitochondrial proteome.</title>
        <authorList>
            <person name="Vaca Jacome A.S."/>
            <person name="Rabilloud T."/>
            <person name="Schaeffer-Reiss C."/>
            <person name="Rompais M."/>
            <person name="Ayoub D."/>
            <person name="Lane L."/>
            <person name="Bairoch A."/>
            <person name="Van Dorsselaer A."/>
            <person name="Carapito C."/>
        </authorList>
    </citation>
    <scope>IDENTIFICATION BY MASS SPECTROMETRY [LARGE SCALE ANALYSIS]</scope>
</reference>
<reference key="14">
    <citation type="journal article" date="2018" name="Oncogene">
        <title>The cancer-associated microprotein CASIMO1 controls cell proliferation and interacts with squalene epoxidase modulating lipid droplet formation.</title>
        <authorList>
            <person name="Polycarpou-Schwarz M."/>
            <person name="Gross M."/>
            <person name="Mestdagh P."/>
            <person name="Schott J."/>
            <person name="Grund S.E."/>
            <person name="Hildenbrand C."/>
            <person name="Rom J."/>
            <person name="Aulmann S."/>
            <person name="Sinn H.P."/>
            <person name="Vandesompele J."/>
            <person name="Diederichs S."/>
        </authorList>
    </citation>
    <scope>INTERACTION WITH SMIM22</scope>
</reference>
<reference evidence="21 22" key="15">
    <citation type="journal article" date="2019" name="Science">
        <title>Cryo-electron microscopy structures of human oligosaccharyltransferase complexes OST-A and OST-B.</title>
        <authorList>
            <person name="Ramirez A.S."/>
            <person name="Kowal J."/>
            <person name="Locher K.P."/>
        </authorList>
    </citation>
    <scope>STRUCTURE BY ELECTRON MICROSCOPY (3.50 ANGSTROMS)</scope>
    <scope>IDENTIFICATION OF THE OLIGOSACCHARYLTRANSFERASE (OST) COMPLEX</scope>
    <scope>FUNCTION</scope>
    <scope>PATHWAY</scope>
</reference>
<reference evidence="23" key="16">
    <citation type="journal article" date="2023" name="Nature">
        <title>Visualization of translation and protein biogenesis at the ER membrane.</title>
        <authorList>
            <person name="Gemmer M."/>
            <person name="Chaillet M.L."/>
            <person name="van Loenhout J."/>
            <person name="Cuevas Arenas R."/>
            <person name="Vismpas D."/>
            <person name="Grollers-Mulderij M."/>
            <person name="Koh F.A."/>
            <person name="Albanese P."/>
            <person name="Scheltema R.A."/>
            <person name="Howes S.C."/>
            <person name="Kotecha A."/>
            <person name="Fedry J."/>
            <person name="Forster F."/>
        </authorList>
    </citation>
    <scope>STRUCTURE BY ELECTRON MICROSCOPY (7.60 ANGSTROMS) OF THE STT3A-CONTAINING OLIGOSACCHARYLTRANSFERASE (OST) AND TRANSLOCON COMPLEXES</scope>
    <scope>SUBUNIT</scope>
</reference>
<reference evidence="24" key="17">
    <citation type="journal article" date="2024" name="Cell">
        <title>Positive selection CRISPR screens reveal a druggable pocket in an oligosaccharyltransferase required for inflammatory signaling to NF-kappaB.</title>
        <authorList>
            <person name="Lampson B.L."/>
            <person name="Ramrez A.S."/>
            <person name="Baro M."/>
            <person name="He L."/>
            <person name="Hegde M."/>
            <person name="Koduri V."/>
            <person name="Pfaff J.L."/>
            <person name="Hanna R.E."/>
            <person name="Kowal J."/>
            <person name="Shirole N.H."/>
            <person name="He Y."/>
            <person name="Doench J.G."/>
            <person name="Contessa J.N."/>
            <person name="Locher K.P."/>
            <person name="Kaelin W.G."/>
        </authorList>
    </citation>
    <scope>STRUCTURE BY ELECTRON MICROSCOPY (3.61 ANGSTROMS) OF THE STT3A-CONTAINING OLIGOSACCHARYLTRANSFERASE (OST)</scope>
    <scope>SUBUNIT</scope>
</reference>
<reference key="18">
    <citation type="journal article" date="2012" name="Am. J. Hum. Genet.">
        <title>DDOST mutations identified by whole-exome sequencing are implicated in congenital disorders of glycosylation.</title>
        <authorList>
            <person name="Jones M.A."/>
            <person name="Ng B.G."/>
            <person name="Bhide S."/>
            <person name="Chin E."/>
            <person name="Rhodenizer D."/>
            <person name="He P."/>
            <person name="Losfeld M.E."/>
            <person name="He M."/>
            <person name="Raymond K."/>
            <person name="Berry G."/>
            <person name="Freeze H.H."/>
            <person name="Hegde M.R."/>
        </authorList>
    </citation>
    <scope>VARIANT CDG1R ASP-217</scope>
</reference>
<proteinExistence type="evidence at protein level"/>
<protein>
    <recommendedName>
        <fullName evidence="19">Dolichyl-diphosphooligosaccharide--protein glycosyltransferase 48 kDa subunit</fullName>
        <shortName>DDOST 48 kDa subunit</shortName>
        <shortName>Oligosaccharyl transferase 48 kDa subunit</shortName>
    </recommendedName>
</protein>
<name>OST48_HUMAN</name>
<gene>
    <name evidence="20" type="primary">DDOST</name>
    <name type="synonym">KIAA0115</name>
    <name type="synonym">OST48</name>
    <name type="ORF">OK/SW-cl.45</name>
</gene>
<evidence type="ECO:0000250" key="1"/>
<evidence type="ECO:0000250" key="2">
    <source>
        <dbReference type="UniProtKB" id="Q05052"/>
    </source>
</evidence>
<evidence type="ECO:0000250" key="3">
    <source>
        <dbReference type="UniProtKB" id="Q29381"/>
    </source>
</evidence>
<evidence type="ECO:0000255" key="4"/>
<evidence type="ECO:0000269" key="5">
    <source>
    </source>
</evidence>
<evidence type="ECO:0000269" key="6">
    <source>
    </source>
</evidence>
<evidence type="ECO:0000269" key="7">
    <source>
    </source>
</evidence>
<evidence type="ECO:0000269" key="8">
    <source>
    </source>
</evidence>
<evidence type="ECO:0000269" key="9">
    <source>
    </source>
</evidence>
<evidence type="ECO:0000269" key="10">
    <source>
    </source>
</evidence>
<evidence type="ECO:0000269" key="11">
    <source>
    </source>
</evidence>
<evidence type="ECO:0000269" key="12">
    <source>
    </source>
</evidence>
<evidence type="ECO:0000269" key="13">
    <source>
    </source>
</evidence>
<evidence type="ECO:0000269" key="14">
    <source>
    </source>
</evidence>
<evidence type="ECO:0000269" key="15">
    <source>
    </source>
</evidence>
<evidence type="ECO:0000269" key="16">
    <source>
    </source>
</evidence>
<evidence type="ECO:0000269" key="17">
    <source ref="5"/>
</evidence>
<evidence type="ECO:0000303" key="18">
    <source>
    </source>
</evidence>
<evidence type="ECO:0000305" key="19"/>
<evidence type="ECO:0000312" key="20">
    <source>
        <dbReference type="HGNC" id="HGNC:2728"/>
    </source>
</evidence>
<evidence type="ECO:0007744" key="21">
    <source>
        <dbReference type="PDB" id="6S7O"/>
    </source>
</evidence>
<evidence type="ECO:0007744" key="22">
    <source>
        <dbReference type="PDB" id="6S7T"/>
    </source>
</evidence>
<evidence type="ECO:0007744" key="23">
    <source>
        <dbReference type="PDB" id="8B6L"/>
    </source>
</evidence>
<evidence type="ECO:0007744" key="24">
    <source>
        <dbReference type="PDB" id="8PN9"/>
    </source>
</evidence>
<evidence type="ECO:0007829" key="25">
    <source>
        <dbReference type="PDB" id="6S7O"/>
    </source>
</evidence>
<evidence type="ECO:0007829" key="26">
    <source>
        <dbReference type="PDB" id="6S7T"/>
    </source>
</evidence>
<accession>P39656</accession>
<accession>B2RDQ4</accession>
<accession>B4DJE3</accession>
<accession>B4DLI2</accession>
<accession>O43244</accession>
<accession>Q5VWA5</accession>
<accession>Q8NI93</accession>
<accession>Q9BUI2</accession>